<accession>Q6MQH5</accession>
<gene>
    <name evidence="1" type="primary">rplM</name>
    <name type="ordered locus">Bd0492</name>
</gene>
<protein>
    <recommendedName>
        <fullName evidence="1">Large ribosomal subunit protein uL13</fullName>
    </recommendedName>
    <alternativeName>
        <fullName evidence="2">50S ribosomal protein L13</fullName>
    </alternativeName>
</protein>
<comment type="function">
    <text evidence="1">This protein is one of the early assembly proteins of the 50S ribosomal subunit, although it is not seen to bind rRNA by itself. It is important during the early stages of 50S assembly.</text>
</comment>
<comment type="subunit">
    <text evidence="1">Part of the 50S ribosomal subunit.</text>
</comment>
<comment type="similarity">
    <text evidence="1">Belongs to the universal ribosomal protein uL13 family.</text>
</comment>
<keyword id="KW-1185">Reference proteome</keyword>
<keyword id="KW-0687">Ribonucleoprotein</keyword>
<keyword id="KW-0689">Ribosomal protein</keyword>
<name>RL13_BDEBA</name>
<proteinExistence type="inferred from homology"/>
<feature type="chain" id="PRO_1000067990" description="Large ribosomal subunit protein uL13">
    <location>
        <begin position="1"/>
        <end position="146"/>
    </location>
</feature>
<reference key="1">
    <citation type="journal article" date="2004" name="Science">
        <title>A predator unmasked: life cycle of Bdellovibrio bacteriovorus from a genomic perspective.</title>
        <authorList>
            <person name="Rendulic S."/>
            <person name="Jagtap P."/>
            <person name="Rosinus A."/>
            <person name="Eppinger M."/>
            <person name="Baar C."/>
            <person name="Lanz C."/>
            <person name="Keller H."/>
            <person name="Lambert C."/>
            <person name="Evans K.J."/>
            <person name="Goesmann A."/>
            <person name="Meyer F."/>
            <person name="Sockett R.E."/>
            <person name="Schuster S.C."/>
        </authorList>
    </citation>
    <scope>NUCLEOTIDE SEQUENCE [LARGE SCALE GENOMIC DNA]</scope>
    <source>
        <strain>ATCC 15356 / DSM 50701 / NCIMB 9529 / HD100</strain>
    </source>
</reference>
<dbReference type="EMBL" id="BX842647">
    <property type="protein sequence ID" value="CAE78472.1"/>
    <property type="molecule type" value="Genomic_DNA"/>
</dbReference>
<dbReference type="RefSeq" id="WP_011163074.1">
    <property type="nucleotide sequence ID" value="NC_005363.1"/>
</dbReference>
<dbReference type="SMR" id="Q6MQH5"/>
<dbReference type="STRING" id="264462.Bd0492"/>
<dbReference type="GeneID" id="93011602"/>
<dbReference type="KEGG" id="bba:Bd0492"/>
<dbReference type="eggNOG" id="COG0102">
    <property type="taxonomic scope" value="Bacteria"/>
</dbReference>
<dbReference type="HOGENOM" id="CLU_082184_2_2_7"/>
<dbReference type="Proteomes" id="UP000008080">
    <property type="component" value="Chromosome"/>
</dbReference>
<dbReference type="GO" id="GO:0022625">
    <property type="term" value="C:cytosolic large ribosomal subunit"/>
    <property type="evidence" value="ECO:0007669"/>
    <property type="project" value="TreeGrafter"/>
</dbReference>
<dbReference type="GO" id="GO:0003729">
    <property type="term" value="F:mRNA binding"/>
    <property type="evidence" value="ECO:0007669"/>
    <property type="project" value="TreeGrafter"/>
</dbReference>
<dbReference type="GO" id="GO:0003735">
    <property type="term" value="F:structural constituent of ribosome"/>
    <property type="evidence" value="ECO:0007669"/>
    <property type="project" value="InterPro"/>
</dbReference>
<dbReference type="GO" id="GO:0017148">
    <property type="term" value="P:negative regulation of translation"/>
    <property type="evidence" value="ECO:0007669"/>
    <property type="project" value="TreeGrafter"/>
</dbReference>
<dbReference type="GO" id="GO:0006412">
    <property type="term" value="P:translation"/>
    <property type="evidence" value="ECO:0007669"/>
    <property type="project" value="UniProtKB-UniRule"/>
</dbReference>
<dbReference type="CDD" id="cd00392">
    <property type="entry name" value="Ribosomal_L13"/>
    <property type="match status" value="1"/>
</dbReference>
<dbReference type="Gene3D" id="3.90.1180.10">
    <property type="entry name" value="Ribosomal protein L13"/>
    <property type="match status" value="1"/>
</dbReference>
<dbReference type="HAMAP" id="MF_01366">
    <property type="entry name" value="Ribosomal_uL13"/>
    <property type="match status" value="1"/>
</dbReference>
<dbReference type="InterPro" id="IPR005822">
    <property type="entry name" value="Ribosomal_uL13"/>
</dbReference>
<dbReference type="InterPro" id="IPR005823">
    <property type="entry name" value="Ribosomal_uL13_bac-type"/>
</dbReference>
<dbReference type="InterPro" id="IPR023563">
    <property type="entry name" value="Ribosomal_uL13_CS"/>
</dbReference>
<dbReference type="InterPro" id="IPR036899">
    <property type="entry name" value="Ribosomal_uL13_sf"/>
</dbReference>
<dbReference type="NCBIfam" id="TIGR01066">
    <property type="entry name" value="rplM_bact"/>
    <property type="match status" value="1"/>
</dbReference>
<dbReference type="PANTHER" id="PTHR11545:SF2">
    <property type="entry name" value="LARGE RIBOSOMAL SUBUNIT PROTEIN UL13M"/>
    <property type="match status" value="1"/>
</dbReference>
<dbReference type="PANTHER" id="PTHR11545">
    <property type="entry name" value="RIBOSOMAL PROTEIN L13"/>
    <property type="match status" value="1"/>
</dbReference>
<dbReference type="Pfam" id="PF00572">
    <property type="entry name" value="Ribosomal_L13"/>
    <property type="match status" value="1"/>
</dbReference>
<dbReference type="PIRSF" id="PIRSF002181">
    <property type="entry name" value="Ribosomal_L13"/>
    <property type="match status" value="1"/>
</dbReference>
<dbReference type="SUPFAM" id="SSF52161">
    <property type="entry name" value="Ribosomal protein L13"/>
    <property type="match status" value="1"/>
</dbReference>
<dbReference type="PROSITE" id="PS00783">
    <property type="entry name" value="RIBOSOMAL_L13"/>
    <property type="match status" value="1"/>
</dbReference>
<evidence type="ECO:0000255" key="1">
    <source>
        <dbReference type="HAMAP-Rule" id="MF_01366"/>
    </source>
</evidence>
<evidence type="ECO:0000305" key="2"/>
<sequence length="146" mass="16492">MKTFNAKAEEVERKWWIVDAAGQKVGRVATHVATILRGKNKAIYTPNVDTGDFVVVINTDKMELSGTKWQDKKYYSHTRFFGSLKEMTAAQAKEKDSTFIIHEAVRGMLPTNKLSRHVIMKMKAYTGAEHPHAAQKPALFTLPSKK</sequence>
<organism>
    <name type="scientific">Bdellovibrio bacteriovorus (strain ATCC 15356 / DSM 50701 / NCIMB 9529 / HD100)</name>
    <dbReference type="NCBI Taxonomy" id="264462"/>
    <lineage>
        <taxon>Bacteria</taxon>
        <taxon>Pseudomonadati</taxon>
        <taxon>Bdellovibrionota</taxon>
        <taxon>Bdellovibrionia</taxon>
        <taxon>Bdellovibrionales</taxon>
        <taxon>Pseudobdellovibrionaceae</taxon>
        <taxon>Bdellovibrio</taxon>
    </lineage>
</organism>